<accession>Q1RK71</accession>
<feature type="chain" id="PRO_0000278041" description="UvrABC system protein A">
    <location>
        <begin position="1"/>
        <end position="953"/>
    </location>
</feature>
<feature type="domain" description="ABC transporter 1" evidence="1">
    <location>
        <begin position="320"/>
        <end position="599"/>
    </location>
</feature>
<feature type="domain" description="ABC transporter 2" evidence="1">
    <location>
        <begin position="619"/>
        <end position="949"/>
    </location>
</feature>
<feature type="zinc finger region" description="C4-type" evidence="1">
    <location>
        <begin position="752"/>
        <end position="778"/>
    </location>
</feature>
<feature type="binding site" evidence="1">
    <location>
        <begin position="33"/>
        <end position="40"/>
    </location>
    <ligand>
        <name>ATP</name>
        <dbReference type="ChEBI" id="CHEBI:30616"/>
    </ligand>
</feature>
<feature type="binding site" evidence="1">
    <location>
        <begin position="652"/>
        <end position="659"/>
    </location>
    <ligand>
        <name>ATP</name>
        <dbReference type="ChEBI" id="CHEBI:30616"/>
    </ligand>
</feature>
<protein>
    <recommendedName>
        <fullName evidence="1">UvrABC system protein A</fullName>
        <shortName evidence="1">UvrA protein</shortName>
    </recommendedName>
    <alternativeName>
        <fullName evidence="1">Excinuclease ABC subunit A</fullName>
    </alternativeName>
</protein>
<name>UVRA_RICBR</name>
<proteinExistence type="inferred from homology"/>
<organism>
    <name type="scientific">Rickettsia bellii (strain RML369-C)</name>
    <dbReference type="NCBI Taxonomy" id="336407"/>
    <lineage>
        <taxon>Bacteria</taxon>
        <taxon>Pseudomonadati</taxon>
        <taxon>Pseudomonadota</taxon>
        <taxon>Alphaproteobacteria</taxon>
        <taxon>Rickettsiales</taxon>
        <taxon>Rickettsiaceae</taxon>
        <taxon>Rickettsieae</taxon>
        <taxon>Rickettsia</taxon>
        <taxon>belli group</taxon>
    </lineage>
</organism>
<evidence type="ECO:0000255" key="1">
    <source>
        <dbReference type="HAMAP-Rule" id="MF_00205"/>
    </source>
</evidence>
<gene>
    <name evidence="1" type="primary">uvrA</name>
    <name type="ordered locus">RBE_0162</name>
</gene>
<sequence>MNQEYIKVRGAKEHNLKNINVDIPRNKFVVITGLSGSGKSSLAFDTIYAEGQRRYVESLSSYARQFLHLQNKPNVESISGLSPAIAIDQKTTSKNPRSTVGTITEIYDYLRLLYARVGIPYSPATGLPIHSQTVSEMVDIINELPQGTKIYLLAPIVRGHKGEFKREIMNLKKQGFQKLIVNGETCEIDDLPKLDKNKKHNIEVIVDRIVLDENLGNRLADSLESSLNLADGITYLEIVELPTAANTEYEKNQRITFSEKYSCPVSGFQLTEIEPRIFSFNSPFGACPKCEGIGKEFFFDRDLIVPDHRISIKDGAIVPWGSTSSKFILETLKALAEHYRFSIESPFSALSDNIKTILFEGSGEEAIRFEFHDGSKTQVIHQPFAGIIPSLQEKDRTIESVLIKEELAKFKSEHKCTACNGYRLKDEALCVKIVNIHIGEVADMSIATLQQWFAHLEQKLNKKQLFIAERILKEINERLKFLMNVGLDYLTLSRESGTLSGGESQRIRLASQIGSGLSGVLYVLDEPSIGLHQRDNTRLIETLKRLRDLGNTVLVVEHDEETMYEADHIIDIGPGAGIHGGRVIAEGNAEEIKNFEESITGRYLSGRQTIKVPTQTRTGHDNRAIELIGAVSNNLDNVDIKIPLGTFTAITGVSGSGKSSLMIHTLYKAALKHLEPTAKVFPGKYQKLKGLEYIDKIIDINQSPIGRTPRSNPATYTGAFTHIRDWFVELPESKARGYKVGRFSFNVKGGRCEACQGDGLIKIEMHFLPDVYVKCDICNGHRYNRETLEIKYKGKSIADILMMTVEDAMQFFEKIPLIYEKLITLNEVGLGYIKIGQSATTLSGGEAQRVKLAKELSRRSTGKTLYILDEPTTGLHIDDINKLLKVLHKLVDMGNTVLVIEHNLDVIKTADYIIDVGPEGGDKGGKIVVHGTPADIAACSESHTGRYLKQYLK</sequence>
<comment type="function">
    <text evidence="1">The UvrABC repair system catalyzes the recognition and processing of DNA lesions. UvrA is an ATPase and a DNA-binding protein. A damage recognition complex composed of 2 UvrA and 2 UvrB subunits scans DNA for abnormalities. When the presence of a lesion has been verified by UvrB, the UvrA molecules dissociate.</text>
</comment>
<comment type="subunit">
    <text evidence="1">Forms a heterotetramer with UvrB during the search for lesions.</text>
</comment>
<comment type="subcellular location">
    <subcellularLocation>
        <location evidence="1">Cytoplasm</location>
    </subcellularLocation>
</comment>
<comment type="similarity">
    <text evidence="1">Belongs to the ABC transporter superfamily. UvrA family.</text>
</comment>
<keyword id="KW-0067">ATP-binding</keyword>
<keyword id="KW-0963">Cytoplasm</keyword>
<keyword id="KW-0227">DNA damage</keyword>
<keyword id="KW-0228">DNA excision</keyword>
<keyword id="KW-0234">DNA repair</keyword>
<keyword id="KW-0238">DNA-binding</keyword>
<keyword id="KW-0267">Excision nuclease</keyword>
<keyword id="KW-0479">Metal-binding</keyword>
<keyword id="KW-0547">Nucleotide-binding</keyword>
<keyword id="KW-0677">Repeat</keyword>
<keyword id="KW-0742">SOS response</keyword>
<keyword id="KW-0862">Zinc</keyword>
<keyword id="KW-0863">Zinc-finger</keyword>
<dbReference type="EMBL" id="CP000087">
    <property type="protein sequence ID" value="ABE04243.1"/>
    <property type="molecule type" value="Genomic_DNA"/>
</dbReference>
<dbReference type="RefSeq" id="WP_011476857.1">
    <property type="nucleotide sequence ID" value="NC_007940.1"/>
</dbReference>
<dbReference type="SMR" id="Q1RK71"/>
<dbReference type="KEGG" id="rbe:RBE_0162"/>
<dbReference type="eggNOG" id="COG0178">
    <property type="taxonomic scope" value="Bacteria"/>
</dbReference>
<dbReference type="HOGENOM" id="CLU_001370_0_2_5"/>
<dbReference type="OrthoDB" id="9809851at2"/>
<dbReference type="Proteomes" id="UP000001951">
    <property type="component" value="Chromosome"/>
</dbReference>
<dbReference type="GO" id="GO:0005737">
    <property type="term" value="C:cytoplasm"/>
    <property type="evidence" value="ECO:0007669"/>
    <property type="project" value="UniProtKB-SubCell"/>
</dbReference>
<dbReference type="GO" id="GO:0009380">
    <property type="term" value="C:excinuclease repair complex"/>
    <property type="evidence" value="ECO:0007669"/>
    <property type="project" value="InterPro"/>
</dbReference>
<dbReference type="GO" id="GO:0005524">
    <property type="term" value="F:ATP binding"/>
    <property type="evidence" value="ECO:0007669"/>
    <property type="project" value="UniProtKB-UniRule"/>
</dbReference>
<dbReference type="GO" id="GO:0016887">
    <property type="term" value="F:ATP hydrolysis activity"/>
    <property type="evidence" value="ECO:0007669"/>
    <property type="project" value="InterPro"/>
</dbReference>
<dbReference type="GO" id="GO:0003677">
    <property type="term" value="F:DNA binding"/>
    <property type="evidence" value="ECO:0007669"/>
    <property type="project" value="UniProtKB-UniRule"/>
</dbReference>
<dbReference type="GO" id="GO:0009381">
    <property type="term" value="F:excinuclease ABC activity"/>
    <property type="evidence" value="ECO:0007669"/>
    <property type="project" value="UniProtKB-UniRule"/>
</dbReference>
<dbReference type="GO" id="GO:0008270">
    <property type="term" value="F:zinc ion binding"/>
    <property type="evidence" value="ECO:0007669"/>
    <property type="project" value="UniProtKB-UniRule"/>
</dbReference>
<dbReference type="GO" id="GO:0006289">
    <property type="term" value="P:nucleotide-excision repair"/>
    <property type="evidence" value="ECO:0007669"/>
    <property type="project" value="UniProtKB-UniRule"/>
</dbReference>
<dbReference type="GO" id="GO:0009432">
    <property type="term" value="P:SOS response"/>
    <property type="evidence" value="ECO:0007669"/>
    <property type="project" value="UniProtKB-UniRule"/>
</dbReference>
<dbReference type="CDD" id="cd03270">
    <property type="entry name" value="ABC_UvrA_I"/>
    <property type="match status" value="1"/>
</dbReference>
<dbReference type="CDD" id="cd03271">
    <property type="entry name" value="ABC_UvrA_II"/>
    <property type="match status" value="1"/>
</dbReference>
<dbReference type="FunFam" id="1.20.1580.10:FF:000002">
    <property type="entry name" value="UvrABC system protein A"/>
    <property type="match status" value="1"/>
</dbReference>
<dbReference type="Gene3D" id="3.30.190.20">
    <property type="match status" value="1"/>
</dbReference>
<dbReference type="Gene3D" id="1.10.8.280">
    <property type="entry name" value="ABC transporter ATPase domain-like"/>
    <property type="match status" value="1"/>
</dbReference>
<dbReference type="Gene3D" id="1.20.1580.10">
    <property type="entry name" value="ABC transporter ATPase like domain"/>
    <property type="match status" value="3"/>
</dbReference>
<dbReference type="Gene3D" id="3.40.50.300">
    <property type="entry name" value="P-loop containing nucleotide triphosphate hydrolases"/>
    <property type="match status" value="3"/>
</dbReference>
<dbReference type="HAMAP" id="MF_00205">
    <property type="entry name" value="UvrA"/>
    <property type="match status" value="1"/>
</dbReference>
<dbReference type="InterPro" id="IPR003439">
    <property type="entry name" value="ABC_transporter-like_ATP-bd"/>
</dbReference>
<dbReference type="InterPro" id="IPR017871">
    <property type="entry name" value="ABC_transporter-like_CS"/>
</dbReference>
<dbReference type="InterPro" id="IPR027417">
    <property type="entry name" value="P-loop_NTPase"/>
</dbReference>
<dbReference type="InterPro" id="IPR004602">
    <property type="entry name" value="UvrA"/>
</dbReference>
<dbReference type="InterPro" id="IPR041552">
    <property type="entry name" value="UvrA_DNA-bd"/>
</dbReference>
<dbReference type="InterPro" id="IPR041102">
    <property type="entry name" value="UvrA_inter"/>
</dbReference>
<dbReference type="NCBIfam" id="NF001503">
    <property type="entry name" value="PRK00349.1"/>
    <property type="match status" value="1"/>
</dbReference>
<dbReference type="NCBIfam" id="TIGR00630">
    <property type="entry name" value="uvra"/>
    <property type="match status" value="1"/>
</dbReference>
<dbReference type="PANTHER" id="PTHR43152">
    <property type="entry name" value="UVRABC SYSTEM PROTEIN A"/>
    <property type="match status" value="1"/>
</dbReference>
<dbReference type="PANTHER" id="PTHR43152:SF3">
    <property type="entry name" value="UVRABC SYSTEM PROTEIN A"/>
    <property type="match status" value="1"/>
</dbReference>
<dbReference type="Pfam" id="PF17755">
    <property type="entry name" value="UvrA_DNA-bind"/>
    <property type="match status" value="1"/>
</dbReference>
<dbReference type="Pfam" id="PF17760">
    <property type="entry name" value="UvrA_inter"/>
    <property type="match status" value="1"/>
</dbReference>
<dbReference type="SUPFAM" id="SSF52540">
    <property type="entry name" value="P-loop containing nucleoside triphosphate hydrolases"/>
    <property type="match status" value="2"/>
</dbReference>
<dbReference type="PROSITE" id="PS00211">
    <property type="entry name" value="ABC_TRANSPORTER_1"/>
    <property type="match status" value="2"/>
</dbReference>
<dbReference type="PROSITE" id="PS50893">
    <property type="entry name" value="ABC_TRANSPORTER_2"/>
    <property type="match status" value="2"/>
</dbReference>
<reference key="1">
    <citation type="journal article" date="2006" name="PLoS Genet.">
        <title>Genome sequence of Rickettsia bellii illuminates the role of amoebae in gene exchanges between intracellular pathogens.</title>
        <authorList>
            <person name="Ogata H."/>
            <person name="La Scola B."/>
            <person name="Audic S."/>
            <person name="Renesto P."/>
            <person name="Blanc G."/>
            <person name="Robert C."/>
            <person name="Fournier P.-E."/>
            <person name="Claverie J.-M."/>
            <person name="Raoult D."/>
        </authorList>
    </citation>
    <scope>NUCLEOTIDE SEQUENCE [LARGE SCALE GENOMIC DNA]</scope>
    <source>
        <strain>RML369-C</strain>
    </source>
</reference>